<gene>
    <name evidence="4" type="primary">SCT</name>
    <name evidence="6" type="ordered locus">At2g25150</name>
    <name type="ORF">F13D4.110</name>
</gene>
<reference key="1">
    <citation type="journal article" date="1999" name="Nature">
        <title>Sequence and analysis of chromosome 2 of the plant Arabidopsis thaliana.</title>
        <authorList>
            <person name="Lin X."/>
            <person name="Kaul S."/>
            <person name="Rounsley S.D."/>
            <person name="Shea T.P."/>
            <person name="Benito M.-I."/>
            <person name="Town C.D."/>
            <person name="Fujii C.Y."/>
            <person name="Mason T.M."/>
            <person name="Bowman C.L."/>
            <person name="Barnstead M.E."/>
            <person name="Feldblyum T.V."/>
            <person name="Buell C.R."/>
            <person name="Ketchum K.A."/>
            <person name="Lee J.J."/>
            <person name="Ronning C.M."/>
            <person name="Koo H.L."/>
            <person name="Moffat K.S."/>
            <person name="Cronin L.A."/>
            <person name="Shen M."/>
            <person name="Pai G."/>
            <person name="Van Aken S."/>
            <person name="Umayam L."/>
            <person name="Tallon L.J."/>
            <person name="Gill J.E."/>
            <person name="Adams M.D."/>
            <person name="Carrera A.J."/>
            <person name="Creasy T.H."/>
            <person name="Goodman H.M."/>
            <person name="Somerville C.R."/>
            <person name="Copenhaver G.P."/>
            <person name="Preuss D."/>
            <person name="Nierman W.C."/>
            <person name="White O."/>
            <person name="Eisen J.A."/>
            <person name="Salzberg S.L."/>
            <person name="Fraser C.M."/>
            <person name="Venter J.C."/>
        </authorList>
    </citation>
    <scope>NUCLEOTIDE SEQUENCE [LARGE SCALE GENOMIC DNA]</scope>
    <source>
        <strain>cv. Columbia</strain>
    </source>
</reference>
<reference key="2">
    <citation type="journal article" date="2017" name="Plant J.">
        <title>Araport11: a complete reannotation of the Arabidopsis thaliana reference genome.</title>
        <authorList>
            <person name="Cheng C.Y."/>
            <person name="Krishnakumar V."/>
            <person name="Chan A.P."/>
            <person name="Thibaud-Nissen F."/>
            <person name="Schobel S."/>
            <person name="Town C.D."/>
        </authorList>
    </citation>
    <scope>GENOME REANNOTATION</scope>
    <source>
        <strain>cv. Columbia</strain>
    </source>
</reference>
<reference key="3">
    <citation type="journal article" date="2002" name="Science">
        <title>Functional annotation of a full-length Arabidopsis cDNA collection.</title>
        <authorList>
            <person name="Seki M."/>
            <person name="Narusaka M."/>
            <person name="Kamiya A."/>
            <person name="Ishida J."/>
            <person name="Satou M."/>
            <person name="Sakurai T."/>
            <person name="Nakajima M."/>
            <person name="Enju A."/>
            <person name="Akiyama K."/>
            <person name="Oono Y."/>
            <person name="Muramatsu M."/>
            <person name="Hayashizaki Y."/>
            <person name="Kawai J."/>
            <person name="Carninci P."/>
            <person name="Itoh M."/>
            <person name="Ishii Y."/>
            <person name="Arakawa T."/>
            <person name="Shibata K."/>
            <person name="Shinagawa A."/>
            <person name="Shinozaki K."/>
        </authorList>
    </citation>
    <scope>NUCLEOTIDE SEQUENCE [LARGE SCALE MRNA]</scope>
    <source>
        <strain>cv. Columbia</strain>
    </source>
</reference>
<reference key="4">
    <citation type="journal article" date="2003" name="Science">
        <title>Empirical analysis of transcriptional activity in the Arabidopsis genome.</title>
        <authorList>
            <person name="Yamada K."/>
            <person name="Lim J."/>
            <person name="Dale J.M."/>
            <person name="Chen H."/>
            <person name="Shinn P."/>
            <person name="Palm C.J."/>
            <person name="Southwick A.M."/>
            <person name="Wu H.C."/>
            <person name="Kim C.J."/>
            <person name="Nguyen M."/>
            <person name="Pham P.K."/>
            <person name="Cheuk R.F."/>
            <person name="Karlin-Newmann G."/>
            <person name="Liu S.X."/>
            <person name="Lam B."/>
            <person name="Sakano H."/>
            <person name="Wu T."/>
            <person name="Yu G."/>
            <person name="Miranda M."/>
            <person name="Quach H.L."/>
            <person name="Tripp M."/>
            <person name="Chang C.H."/>
            <person name="Lee J.M."/>
            <person name="Toriumi M.J."/>
            <person name="Chan M.M."/>
            <person name="Tang C.C."/>
            <person name="Onodera C.S."/>
            <person name="Deng J.M."/>
            <person name="Akiyama K."/>
            <person name="Ansari Y."/>
            <person name="Arakawa T."/>
            <person name="Banh J."/>
            <person name="Banno F."/>
            <person name="Bowser L."/>
            <person name="Brooks S.Y."/>
            <person name="Carninci P."/>
            <person name="Chao Q."/>
            <person name="Choy N."/>
            <person name="Enju A."/>
            <person name="Goldsmith A.D."/>
            <person name="Gurjal M."/>
            <person name="Hansen N.F."/>
            <person name="Hayashizaki Y."/>
            <person name="Johnson-Hopson C."/>
            <person name="Hsuan V.W."/>
            <person name="Iida K."/>
            <person name="Karnes M."/>
            <person name="Khan S."/>
            <person name="Koesema E."/>
            <person name="Ishida J."/>
            <person name="Jiang P.X."/>
            <person name="Jones T."/>
            <person name="Kawai J."/>
            <person name="Kamiya A."/>
            <person name="Meyers C."/>
            <person name="Nakajima M."/>
            <person name="Narusaka M."/>
            <person name="Seki M."/>
            <person name="Sakurai T."/>
            <person name="Satou M."/>
            <person name="Tamse R."/>
            <person name="Vaysberg M."/>
            <person name="Wallender E.K."/>
            <person name="Wong C."/>
            <person name="Yamamura Y."/>
            <person name="Yuan S."/>
            <person name="Shinozaki K."/>
            <person name="Davis R.W."/>
            <person name="Theologis A."/>
            <person name="Ecker J.R."/>
        </authorList>
    </citation>
    <scope>NUCLEOTIDE SEQUENCE [LARGE SCALE MRNA]</scope>
    <source>
        <strain>cv. Columbia</strain>
    </source>
</reference>
<reference key="5">
    <citation type="journal article" date="2009" name="Plant Cell">
        <title>A novel polyamine acyltransferase responsible for the accumulation of spermidine conjugates in Arabidopsis seed.</title>
        <authorList>
            <person name="Luo J."/>
            <person name="Fuell C."/>
            <person name="Parr A."/>
            <person name="Hill L."/>
            <person name="Bailey P."/>
            <person name="Elliott K."/>
            <person name="Fairhurst S.A."/>
            <person name="Martin C."/>
            <person name="Michael A.J."/>
        </authorList>
    </citation>
    <scope>FUNCTION</scope>
    <scope>TISSUE SPECIFICITY</scope>
    <scope>PATHWAY</scope>
    <scope>BIOPHYSICOCHEMICAL PROPERTIES</scope>
    <scope>CATALYTIC ACTIVITY</scope>
    <source>
        <strain>cv. Columbia</strain>
    </source>
</reference>
<proteinExistence type="evidence at protein level"/>
<protein>
    <recommendedName>
        <fullName evidence="4">Spermidine coumaroyl-CoA acyltransferase</fullName>
        <shortName evidence="4">SCT</shortName>
        <shortName evidence="4">Spermidine dicoumaroyl transferase</shortName>
        <ecNumber evidence="3">2.3.1.249</ecNumber>
    </recommendedName>
</protein>
<comment type="function">
    <text evidence="3">Spermidine coumaroyl-CoA acyltransferase that mediates the conversion of spermidine into dicoumaroyl-spermidine.</text>
</comment>
<comment type="catalytic activity">
    <reaction evidence="3">
        <text>2 (E)-4-coumaroyl-CoA + spermidine = N(1),N(8)-bis(coumaroyl)-spermidine + 2 CoA + 2 H(+)</text>
        <dbReference type="Rhea" id="RHEA:45180"/>
        <dbReference type="ChEBI" id="CHEBI:15378"/>
        <dbReference type="ChEBI" id="CHEBI:57287"/>
        <dbReference type="ChEBI" id="CHEBI:57834"/>
        <dbReference type="ChEBI" id="CHEBI:85007"/>
        <dbReference type="ChEBI" id="CHEBI:85008"/>
        <dbReference type="EC" id="2.3.1.249"/>
    </reaction>
</comment>
<comment type="biophysicochemical properties">
    <kinetics>
        <KM evidence="3">10.6 uM for coumaroyl-CoA (with spermidine as the acyl acceptor, at 30 degrees Celsius)</KM>
        <KM evidence="3">52.7 uM for spermidine (with sinapoyl-CoA as the acyl donor, at 30 degrees Celsius)</KM>
        <text evidence="3">kcat is 3.4 sec(-1) with coumaroyl-CoA as substrate (in the presence of spermidine as the acyl acceptor). kcat is 3.1 sec(-1) with spermidin as substrate (in the presence of coumaroyl-CoA as the acyl donor). All analyses are done at 30 degrees Celsius.</text>
    </kinetics>
    <phDependence>
        <text evidence="3">Optimum pH is 9 using spermidine and coumaroyl-CoA as substrates.</text>
    </phDependence>
</comment>
<comment type="pathway">
    <text evidence="3">Amine and polyamine metabolism; spermidine metabolism.</text>
</comment>
<comment type="subunit">
    <text evidence="2">Monomer.</text>
</comment>
<comment type="tissue specificity">
    <text evidence="3">Mainly expressed in roots at low levels, specifically, in the root tip.</text>
</comment>
<comment type="similarity">
    <text evidence="5">Belongs to the plant acyltransferase family.</text>
</comment>
<dbReference type="EC" id="2.3.1.249" evidence="3"/>
<dbReference type="EMBL" id="CP002685">
    <property type="protein sequence ID" value="AEC07663.1"/>
    <property type="molecule type" value="Genomic_DNA"/>
</dbReference>
<dbReference type="EMBL" id="AK117345">
    <property type="protein sequence ID" value="BAC42015.1"/>
    <property type="molecule type" value="mRNA"/>
</dbReference>
<dbReference type="EMBL" id="BT009686">
    <property type="protein sequence ID" value="AAP81804.1"/>
    <property type="molecule type" value="mRNA"/>
</dbReference>
<dbReference type="PIR" id="H84644">
    <property type="entry name" value="H84644"/>
</dbReference>
<dbReference type="RefSeq" id="NP_180087.1">
    <property type="nucleotide sequence ID" value="NM_128072.3"/>
</dbReference>
<dbReference type="SMR" id="Q8GYW8"/>
<dbReference type="STRING" id="3702.Q8GYW8"/>
<dbReference type="iPTMnet" id="Q8GYW8"/>
<dbReference type="PaxDb" id="3702-AT2G25150.1"/>
<dbReference type="EnsemblPlants" id="AT2G25150.1">
    <property type="protein sequence ID" value="AT2G25150.1"/>
    <property type="gene ID" value="AT2G25150"/>
</dbReference>
<dbReference type="GeneID" id="817053"/>
<dbReference type="Gramene" id="AT2G25150.1">
    <property type="protein sequence ID" value="AT2G25150.1"/>
    <property type="gene ID" value="AT2G25150"/>
</dbReference>
<dbReference type="KEGG" id="ath:AT2G25150"/>
<dbReference type="Araport" id="AT2G25150"/>
<dbReference type="TAIR" id="AT2G25150"/>
<dbReference type="eggNOG" id="ENOG502QV0F">
    <property type="taxonomic scope" value="Eukaryota"/>
</dbReference>
<dbReference type="HOGENOM" id="CLU_014546_2_0_1"/>
<dbReference type="InParanoid" id="Q8GYW8"/>
<dbReference type="OMA" id="EAIPPYM"/>
<dbReference type="PhylomeDB" id="Q8GYW8"/>
<dbReference type="BioCyc" id="ARA:AT2G25150-MONOMER"/>
<dbReference type="BRENDA" id="2.3.1.249">
    <property type="organism ID" value="399"/>
</dbReference>
<dbReference type="UniPathway" id="UPA00819"/>
<dbReference type="PRO" id="PR:Q8GYW8"/>
<dbReference type="Proteomes" id="UP000006548">
    <property type="component" value="Chromosome 2"/>
</dbReference>
<dbReference type="ExpressionAtlas" id="Q8GYW8">
    <property type="expression patterns" value="baseline and differential"/>
</dbReference>
<dbReference type="GO" id="GO:0080073">
    <property type="term" value="F:spermidine:coumaroyl CoA N-acyltransferase activity"/>
    <property type="evidence" value="ECO:0000314"/>
    <property type="project" value="UniProtKB"/>
</dbReference>
<dbReference type="GO" id="GO:0006596">
    <property type="term" value="P:polyamine biosynthetic process"/>
    <property type="evidence" value="ECO:0007669"/>
    <property type="project" value="UniProtKB-KW"/>
</dbReference>
<dbReference type="GO" id="GO:0008216">
    <property type="term" value="P:spermidine metabolic process"/>
    <property type="evidence" value="ECO:0007669"/>
    <property type="project" value="UniProtKB-UniPathway"/>
</dbReference>
<dbReference type="FunFam" id="3.30.559.10:FF:000084">
    <property type="entry name" value="Spermidine coumaroyl-CoA acyltransferase"/>
    <property type="match status" value="1"/>
</dbReference>
<dbReference type="FunFam" id="3.30.559.10:FF:000106">
    <property type="entry name" value="Spermidine sinapoyl-CoA acyltransferase"/>
    <property type="match status" value="1"/>
</dbReference>
<dbReference type="Gene3D" id="3.30.559.10">
    <property type="entry name" value="Chloramphenicol acetyltransferase-like domain"/>
    <property type="match status" value="2"/>
</dbReference>
<dbReference type="InterPro" id="IPR023213">
    <property type="entry name" value="CAT-like_dom_sf"/>
</dbReference>
<dbReference type="InterPro" id="IPR050898">
    <property type="entry name" value="Plant_acyltransferase"/>
</dbReference>
<dbReference type="PANTHER" id="PTHR31147">
    <property type="entry name" value="ACYL TRANSFERASE 4"/>
    <property type="match status" value="1"/>
</dbReference>
<dbReference type="PANTHER" id="PTHR31147:SF29">
    <property type="entry name" value="SPERMIDINE COUMAROYL-COA ACYLTRANSFERASE"/>
    <property type="match status" value="1"/>
</dbReference>
<dbReference type="Pfam" id="PF02458">
    <property type="entry name" value="Transferase"/>
    <property type="match status" value="1"/>
</dbReference>
<evidence type="ECO:0000250" key="1">
    <source>
        <dbReference type="UniProtKB" id="Q70PR7"/>
    </source>
</evidence>
<evidence type="ECO:0000250" key="2">
    <source>
        <dbReference type="UniProtKB" id="Q9M6E2"/>
    </source>
</evidence>
<evidence type="ECO:0000269" key="3">
    <source>
    </source>
</evidence>
<evidence type="ECO:0000303" key="4">
    <source>
    </source>
</evidence>
<evidence type="ECO:0000305" key="5"/>
<evidence type="ECO:0000312" key="6">
    <source>
        <dbReference type="Araport" id="AT2G25150"/>
    </source>
</evidence>
<evidence type="ECO:0000312" key="7">
    <source>
        <dbReference type="EMBL" id="BAC42015.1"/>
    </source>
</evidence>
<feature type="chain" id="PRO_0000432772" description="Spermidine coumaroyl-CoA acyltransferase">
    <location>
        <begin position="1"/>
        <end position="461"/>
    </location>
</feature>
<feature type="active site" description="Proton acceptor" evidence="1">
    <location>
        <position position="168"/>
    </location>
</feature>
<feature type="active site" description="Proton acceptor" evidence="1">
    <location>
        <position position="393"/>
    </location>
</feature>
<sequence>MANQRKPILPLLLEKKPVELVKPSKHTHCETLSLSTLDNDPFNEVMYATIYVFKANGKNLDDPVSLLRKALSELLVHYYPLSGKLMRSESNGKLQLVYLGEGVPFEVATSTLDLSSLNYIENLDDQVALRLVPEIEIDYESNVCYHPLALQVTKFACGGFTIGTALTHAVCDGYGVAQIIHALTELAAGKTEPSVKSVWQRERLVGKIDNKPGKVPGSHIDGFLATSAYLPTTDVVTETINIRAGDIKRLKDSMMKECEYLKESFTTYEVLSSYIWKLRSRALKLNPDGITVLGVAVGIRHVLDPPLPKGYYGNAYIDVYVELTVRELEESSISNIANRVKKAKKTAYEKGYIEEELKNTERLMRDDSMFEGVSDGLFFLTDWRNIGWFGSMDFGWNEPVNLRPLTQRESTVHVGMILKPSKSDPSMEGGVKVIMKLPRDAMVEFKREMATMKKLYFGDTN</sequence>
<keyword id="KW-0012">Acyltransferase</keyword>
<keyword id="KW-0620">Polyamine biosynthesis</keyword>
<keyword id="KW-1185">Reference proteome</keyword>
<keyword id="KW-0808">Transferase</keyword>
<accession>Q8GYW8</accession>
<name>SCT_ARATH</name>
<organism evidence="7">
    <name type="scientific">Arabidopsis thaliana</name>
    <name type="common">Mouse-ear cress</name>
    <dbReference type="NCBI Taxonomy" id="3702"/>
    <lineage>
        <taxon>Eukaryota</taxon>
        <taxon>Viridiplantae</taxon>
        <taxon>Streptophyta</taxon>
        <taxon>Embryophyta</taxon>
        <taxon>Tracheophyta</taxon>
        <taxon>Spermatophyta</taxon>
        <taxon>Magnoliopsida</taxon>
        <taxon>eudicotyledons</taxon>
        <taxon>Gunneridae</taxon>
        <taxon>Pentapetalae</taxon>
        <taxon>rosids</taxon>
        <taxon>malvids</taxon>
        <taxon>Brassicales</taxon>
        <taxon>Brassicaceae</taxon>
        <taxon>Camelineae</taxon>
        <taxon>Arabidopsis</taxon>
    </lineage>
</organism>